<dbReference type="EMBL" id="Z28636">
    <property type="protein sequence ID" value="CAA82265.1"/>
    <property type="molecule type" value="Genomic_DNA"/>
</dbReference>
<dbReference type="SMR" id="Q38693"/>
<dbReference type="GO" id="GO:0009507">
    <property type="term" value="C:chloroplast"/>
    <property type="evidence" value="ECO:0007669"/>
    <property type="project" value="UniProtKB-SubCell"/>
</dbReference>
<dbReference type="GO" id="GO:0004497">
    <property type="term" value="F:monooxygenase activity"/>
    <property type="evidence" value="ECO:0007669"/>
    <property type="project" value="UniProtKB-KW"/>
</dbReference>
<dbReference type="GO" id="GO:0016984">
    <property type="term" value="F:ribulose-bisphosphate carboxylase activity"/>
    <property type="evidence" value="ECO:0007669"/>
    <property type="project" value="UniProtKB-UniRule"/>
</dbReference>
<dbReference type="GO" id="GO:0009853">
    <property type="term" value="P:photorespiration"/>
    <property type="evidence" value="ECO:0007669"/>
    <property type="project" value="UniProtKB-KW"/>
</dbReference>
<dbReference type="GO" id="GO:0019253">
    <property type="term" value="P:reductive pentose-phosphate cycle"/>
    <property type="evidence" value="ECO:0007669"/>
    <property type="project" value="UniProtKB-UniRule"/>
</dbReference>
<dbReference type="CDD" id="cd03527">
    <property type="entry name" value="RuBisCO_small"/>
    <property type="match status" value="1"/>
</dbReference>
<dbReference type="FunFam" id="3.30.190.10:FF:000001">
    <property type="entry name" value="Ribulose bisphosphate carboxylase small chain, chloroplastic"/>
    <property type="match status" value="1"/>
</dbReference>
<dbReference type="Gene3D" id="3.30.190.10">
    <property type="entry name" value="Ribulose bisphosphate carboxylase, small subunit"/>
    <property type="match status" value="1"/>
</dbReference>
<dbReference type="HAMAP" id="MF_00859">
    <property type="entry name" value="RuBisCO_S_bact"/>
    <property type="match status" value="1"/>
</dbReference>
<dbReference type="InterPro" id="IPR024681">
    <property type="entry name" value="RuBisCO_ssu"/>
</dbReference>
<dbReference type="InterPro" id="IPR000894">
    <property type="entry name" value="RuBisCO_ssu_dom"/>
</dbReference>
<dbReference type="InterPro" id="IPR036385">
    <property type="entry name" value="RuBisCO_ssu_sf"/>
</dbReference>
<dbReference type="PANTHER" id="PTHR31262">
    <property type="entry name" value="RIBULOSE BISPHOSPHATE CARBOXYLASE SMALL CHAIN 1, CHLOROPLASTIC"/>
    <property type="match status" value="1"/>
</dbReference>
<dbReference type="PANTHER" id="PTHR31262:SF0">
    <property type="entry name" value="RIBULOSE BISPHOSPHATE CARBOXYLASE SMALL SUBUNIT, CHLOROPLASTIC 1"/>
    <property type="match status" value="1"/>
</dbReference>
<dbReference type="Pfam" id="PF00101">
    <property type="entry name" value="RuBisCO_small"/>
    <property type="match status" value="1"/>
</dbReference>
<dbReference type="PRINTS" id="PR00152">
    <property type="entry name" value="RUBISCOSMALL"/>
</dbReference>
<dbReference type="SMART" id="SM00961">
    <property type="entry name" value="RuBisCO_small"/>
    <property type="match status" value="1"/>
</dbReference>
<dbReference type="SUPFAM" id="SSF55239">
    <property type="entry name" value="RuBisCO, small subunit"/>
    <property type="match status" value="1"/>
</dbReference>
<sequence>MAAAMMNKTVVVGKESVKGGVAPKVAMSRGGFLNSGIMKKDRDMMVWQPFNNKMFETFSYLPPLTDEQISKQVDYILANSWTPCLEFAASDQAYAGNENCIRMGPVASTYQDNRYWTMWKLPMFGCTDGSQVLSDMQACTKAFPDAYIRLVCFDANRQVQICGFLVHRPPSATDYRLPADRQV</sequence>
<feature type="transit peptide" description="Chloroplast" evidence="1">
    <location>
        <begin position="1"/>
        <end position="43"/>
    </location>
</feature>
<feature type="chain" id="PRO_0000031453" description="Ribulose bisphosphate carboxylase small subunit, chloroplastic 7">
    <location>
        <begin position="44"/>
        <end position="183"/>
    </location>
</feature>
<organism>
    <name type="scientific">Acetabularia peniculus</name>
    <name type="common">Green alga</name>
    <name type="synonym">Polyphysa peniculus</name>
    <dbReference type="NCBI Taxonomy" id="35862"/>
    <lineage>
        <taxon>Eukaryota</taxon>
        <taxon>Viridiplantae</taxon>
        <taxon>Chlorophyta</taxon>
        <taxon>Ulvophyceae</taxon>
        <taxon>TCBD clade</taxon>
        <taxon>Dasycladales</taxon>
        <taxon>Polyphysaceae</taxon>
        <taxon>Acetabularia</taxon>
    </lineage>
</organism>
<comment type="function">
    <text evidence="2">RuBisCO catalyzes two reactions: the carboxylation of D-ribulose 1,5-bisphosphate, the primary event in carbon dioxide fixation, as well as the oxidative fragmentation of the pentose substrate. Both reactions occur simultaneously and in competition at the same active site. Although the small subunit is not catalytic it is essential for maximal activity.</text>
</comment>
<comment type="subunit">
    <text evidence="2">Heterohexadecamer of 8 large and 8 small subunits.</text>
</comment>
<comment type="subcellular location">
    <subcellularLocation>
        <location evidence="2">Plastid</location>
        <location evidence="2">Chloroplast</location>
    </subcellularLocation>
</comment>
<comment type="miscellaneous">
    <text evidence="2">The basic functional RuBisCO is composed of a large chain homodimer in a 'head-to-tail' conformation. In form I RuBisCO this homodimer is arranged in a barrel-like tetramer with the small subunits forming a tetrameric 'cap' on each end of the 'barrel'.</text>
</comment>
<comment type="similarity">
    <text evidence="2">Belongs to the RuBisCO small chain family.</text>
</comment>
<accession>Q38693</accession>
<name>RBS7_ACEPE</name>
<gene>
    <name evidence="2" type="primary">RBCS7</name>
    <name type="synonym">RBCS-7</name>
</gene>
<reference key="1">
    <citation type="submission" date="1993-12" db="EMBL/GenBank/DDBJ databases">
        <title>Characterization of two genes for isoforms of the small subunit of ribulose-1,5-bisphosphate carboxylase oxygenase (rbcS) from the marine unicellular green alga Acetabularia cliftonii (Dasycladales).</title>
        <authorList>
            <person name="Frank S."/>
            <person name="Menzel D."/>
        </authorList>
    </citation>
    <scope>NUCLEOTIDE SEQUENCE [GENOMIC DNA]</scope>
</reference>
<evidence type="ECO:0000250" key="1"/>
<evidence type="ECO:0000255" key="2">
    <source>
        <dbReference type="HAMAP-Rule" id="MF_00860"/>
    </source>
</evidence>
<protein>
    <recommendedName>
        <fullName evidence="2">Ribulose bisphosphate carboxylase small subunit, chloroplastic 7</fullName>
        <shortName evidence="2">RuBisCO small subunit 7</shortName>
    </recommendedName>
    <alternativeName>
        <fullName>rbcS1</fullName>
    </alternativeName>
</protein>
<keyword id="KW-0113">Calvin cycle</keyword>
<keyword id="KW-0120">Carbon dioxide fixation</keyword>
<keyword id="KW-0150">Chloroplast</keyword>
<keyword id="KW-0456">Lyase</keyword>
<keyword id="KW-0503">Monooxygenase</keyword>
<keyword id="KW-0560">Oxidoreductase</keyword>
<keyword id="KW-0601">Photorespiration</keyword>
<keyword id="KW-0602">Photosynthesis</keyword>
<keyword id="KW-0934">Plastid</keyword>
<keyword id="KW-0809">Transit peptide</keyword>
<proteinExistence type="inferred from homology"/>